<sequence>MKKVTSLKKRSDNCKIVKRKGCLRIINKLNPKFKQKQG</sequence>
<evidence type="ECO:0000255" key="1">
    <source>
        <dbReference type="HAMAP-Rule" id="MF_00251"/>
    </source>
</evidence>
<evidence type="ECO:0000305" key="2"/>
<comment type="similarity">
    <text evidence="1">Belongs to the bacterial ribosomal protein bL36 family.</text>
</comment>
<gene>
    <name evidence="1" type="primary">rpmJ</name>
    <name type="ordered locus">SMGWSS_241</name>
</gene>
<accession>A8Z687</accession>
<protein>
    <recommendedName>
        <fullName evidence="1">Large ribosomal subunit protein bL36</fullName>
    </recommendedName>
    <alternativeName>
        <fullName evidence="2">50S ribosomal protein L36</fullName>
    </alternativeName>
</protein>
<organism>
    <name type="scientific">Karelsulcia muelleri (strain GWSS)</name>
    <name type="common">Sulcia muelleri</name>
    <dbReference type="NCBI Taxonomy" id="444179"/>
    <lineage>
        <taxon>Bacteria</taxon>
        <taxon>Pseudomonadati</taxon>
        <taxon>Bacteroidota</taxon>
        <taxon>Flavobacteriia</taxon>
        <taxon>Flavobacteriales</taxon>
        <taxon>Candidatus Karelsulcia</taxon>
    </lineage>
</organism>
<dbReference type="EMBL" id="CP000770">
    <property type="protein sequence ID" value="ABS30638.1"/>
    <property type="molecule type" value="Genomic_DNA"/>
</dbReference>
<dbReference type="SMR" id="A8Z687"/>
<dbReference type="STRING" id="444179.SMGWSS_241"/>
<dbReference type="KEGG" id="smg:SMGWSS_241"/>
<dbReference type="HOGENOM" id="CLU_135723_3_3_10"/>
<dbReference type="Proteomes" id="UP000000781">
    <property type="component" value="Chromosome"/>
</dbReference>
<dbReference type="GO" id="GO:1990904">
    <property type="term" value="C:ribonucleoprotein complex"/>
    <property type="evidence" value="ECO:0007669"/>
    <property type="project" value="UniProtKB-KW"/>
</dbReference>
<dbReference type="GO" id="GO:0005840">
    <property type="term" value="C:ribosome"/>
    <property type="evidence" value="ECO:0007669"/>
    <property type="project" value="UniProtKB-KW"/>
</dbReference>
<dbReference type="GO" id="GO:0003735">
    <property type="term" value="F:structural constituent of ribosome"/>
    <property type="evidence" value="ECO:0007669"/>
    <property type="project" value="InterPro"/>
</dbReference>
<dbReference type="GO" id="GO:0006412">
    <property type="term" value="P:translation"/>
    <property type="evidence" value="ECO:0007669"/>
    <property type="project" value="UniProtKB-UniRule"/>
</dbReference>
<dbReference type="HAMAP" id="MF_00251">
    <property type="entry name" value="Ribosomal_bL36"/>
    <property type="match status" value="1"/>
</dbReference>
<dbReference type="InterPro" id="IPR000473">
    <property type="entry name" value="Ribosomal_bL36"/>
</dbReference>
<dbReference type="InterPro" id="IPR035977">
    <property type="entry name" value="Ribosomal_bL36_sp"/>
</dbReference>
<dbReference type="NCBIfam" id="TIGR01022">
    <property type="entry name" value="rpmJ_bact"/>
    <property type="match status" value="1"/>
</dbReference>
<dbReference type="Pfam" id="PF00444">
    <property type="entry name" value="Ribosomal_L36"/>
    <property type="match status" value="1"/>
</dbReference>
<dbReference type="SUPFAM" id="SSF57840">
    <property type="entry name" value="Ribosomal protein L36"/>
    <property type="match status" value="1"/>
</dbReference>
<dbReference type="PROSITE" id="PS00828">
    <property type="entry name" value="RIBOSOMAL_L36"/>
    <property type="match status" value="1"/>
</dbReference>
<feature type="chain" id="PRO_0000344723" description="Large ribosomal subunit protein bL36">
    <location>
        <begin position="1"/>
        <end position="38"/>
    </location>
</feature>
<name>RL36_KARMG</name>
<keyword id="KW-0687">Ribonucleoprotein</keyword>
<keyword id="KW-0689">Ribosomal protein</keyword>
<proteinExistence type="inferred from homology"/>
<reference key="1">
    <citation type="journal article" date="2007" name="Proc. Natl. Acad. Sci. U.S.A.">
        <title>Parallel genomic evolution and metabolic interdependence in an ancient symbiosis.</title>
        <authorList>
            <person name="McCutcheon J.P."/>
            <person name="Moran N.A."/>
        </authorList>
    </citation>
    <scope>NUCLEOTIDE SEQUENCE [LARGE SCALE GENOMIC DNA]</scope>
    <source>
        <strain>GWSS</strain>
    </source>
</reference>